<feature type="chain" id="PRO_0000223993" description="Large ribosomal subunit protein uL6">
    <location>
        <begin position="1"/>
        <end position="178"/>
    </location>
</feature>
<protein>
    <recommendedName>
        <fullName evidence="1">Large ribosomal subunit protein uL6</fullName>
    </recommendedName>
    <alternativeName>
        <fullName evidence="2">50S ribosomal protein L6</fullName>
    </alternativeName>
</protein>
<reference key="1">
    <citation type="journal article" date="2005" name="Proc. Natl. Acad. Sci. U.S.A.">
        <title>Whole genome sequence of Staphylococcus saprophyticus reveals the pathogenesis of uncomplicated urinary tract infection.</title>
        <authorList>
            <person name="Kuroda M."/>
            <person name="Yamashita A."/>
            <person name="Hirakawa H."/>
            <person name="Kumano M."/>
            <person name="Morikawa K."/>
            <person name="Higashide M."/>
            <person name="Maruyama A."/>
            <person name="Inose Y."/>
            <person name="Matoba K."/>
            <person name="Toh H."/>
            <person name="Kuhara S."/>
            <person name="Hattori M."/>
            <person name="Ohta T."/>
        </authorList>
    </citation>
    <scope>NUCLEOTIDE SEQUENCE [LARGE SCALE GENOMIC DNA]</scope>
    <source>
        <strain>ATCC 15305 / DSM 20229 / NCIMB 8711 / NCTC 7292 / S-41</strain>
    </source>
</reference>
<accession>Q49ZF3</accession>
<keyword id="KW-1185">Reference proteome</keyword>
<keyword id="KW-0687">Ribonucleoprotein</keyword>
<keyword id="KW-0689">Ribosomal protein</keyword>
<keyword id="KW-0694">RNA-binding</keyword>
<keyword id="KW-0699">rRNA-binding</keyword>
<evidence type="ECO:0000255" key="1">
    <source>
        <dbReference type="HAMAP-Rule" id="MF_01365"/>
    </source>
</evidence>
<evidence type="ECO:0000305" key="2"/>
<gene>
    <name evidence="1" type="primary">rplF</name>
    <name type="ordered locus">SSP0678</name>
</gene>
<dbReference type="EMBL" id="AP008934">
    <property type="protein sequence ID" value="BAE17823.1"/>
    <property type="molecule type" value="Genomic_DNA"/>
</dbReference>
<dbReference type="RefSeq" id="WP_002482627.1">
    <property type="nucleotide sequence ID" value="NZ_MTGA01000036.1"/>
</dbReference>
<dbReference type="SMR" id="Q49ZF3"/>
<dbReference type="GeneID" id="66866825"/>
<dbReference type="KEGG" id="ssp:SSP0678"/>
<dbReference type="eggNOG" id="COG0097">
    <property type="taxonomic scope" value="Bacteria"/>
</dbReference>
<dbReference type="HOGENOM" id="CLU_065464_1_2_9"/>
<dbReference type="OrthoDB" id="9805007at2"/>
<dbReference type="Proteomes" id="UP000006371">
    <property type="component" value="Chromosome"/>
</dbReference>
<dbReference type="GO" id="GO:0022625">
    <property type="term" value="C:cytosolic large ribosomal subunit"/>
    <property type="evidence" value="ECO:0007669"/>
    <property type="project" value="TreeGrafter"/>
</dbReference>
<dbReference type="GO" id="GO:0019843">
    <property type="term" value="F:rRNA binding"/>
    <property type="evidence" value="ECO:0007669"/>
    <property type="project" value="UniProtKB-UniRule"/>
</dbReference>
<dbReference type="GO" id="GO:0003735">
    <property type="term" value="F:structural constituent of ribosome"/>
    <property type="evidence" value="ECO:0007669"/>
    <property type="project" value="InterPro"/>
</dbReference>
<dbReference type="GO" id="GO:0002181">
    <property type="term" value="P:cytoplasmic translation"/>
    <property type="evidence" value="ECO:0007669"/>
    <property type="project" value="TreeGrafter"/>
</dbReference>
<dbReference type="FunFam" id="3.90.930.12:FF:000001">
    <property type="entry name" value="50S ribosomal protein L6"/>
    <property type="match status" value="1"/>
</dbReference>
<dbReference type="FunFam" id="3.90.930.12:FF:000002">
    <property type="entry name" value="50S ribosomal protein L6"/>
    <property type="match status" value="1"/>
</dbReference>
<dbReference type="Gene3D" id="3.90.930.12">
    <property type="entry name" value="Ribosomal protein L6, alpha-beta domain"/>
    <property type="match status" value="2"/>
</dbReference>
<dbReference type="HAMAP" id="MF_01365_B">
    <property type="entry name" value="Ribosomal_uL6_B"/>
    <property type="match status" value="1"/>
</dbReference>
<dbReference type="InterPro" id="IPR000702">
    <property type="entry name" value="Ribosomal_uL6-like"/>
</dbReference>
<dbReference type="InterPro" id="IPR036789">
    <property type="entry name" value="Ribosomal_uL6-like_a/b-dom_sf"/>
</dbReference>
<dbReference type="InterPro" id="IPR020040">
    <property type="entry name" value="Ribosomal_uL6_a/b-dom"/>
</dbReference>
<dbReference type="InterPro" id="IPR019906">
    <property type="entry name" value="Ribosomal_uL6_bac-type"/>
</dbReference>
<dbReference type="InterPro" id="IPR002358">
    <property type="entry name" value="Ribosomal_uL6_CS"/>
</dbReference>
<dbReference type="NCBIfam" id="TIGR03654">
    <property type="entry name" value="L6_bact"/>
    <property type="match status" value="1"/>
</dbReference>
<dbReference type="PANTHER" id="PTHR11655">
    <property type="entry name" value="60S/50S RIBOSOMAL PROTEIN L6/L9"/>
    <property type="match status" value="1"/>
</dbReference>
<dbReference type="PANTHER" id="PTHR11655:SF14">
    <property type="entry name" value="LARGE RIBOSOMAL SUBUNIT PROTEIN UL6M"/>
    <property type="match status" value="1"/>
</dbReference>
<dbReference type="Pfam" id="PF00347">
    <property type="entry name" value="Ribosomal_L6"/>
    <property type="match status" value="2"/>
</dbReference>
<dbReference type="PIRSF" id="PIRSF002162">
    <property type="entry name" value="Ribosomal_L6"/>
    <property type="match status" value="1"/>
</dbReference>
<dbReference type="PRINTS" id="PR00059">
    <property type="entry name" value="RIBOSOMALL6"/>
</dbReference>
<dbReference type="SUPFAM" id="SSF56053">
    <property type="entry name" value="Ribosomal protein L6"/>
    <property type="match status" value="2"/>
</dbReference>
<dbReference type="PROSITE" id="PS00525">
    <property type="entry name" value="RIBOSOMAL_L6_1"/>
    <property type="match status" value="1"/>
</dbReference>
<name>RL6_STAS1</name>
<organism>
    <name type="scientific">Staphylococcus saprophyticus subsp. saprophyticus (strain ATCC 15305 / DSM 20229 / NCIMB 8711 / NCTC 7292 / S-41)</name>
    <dbReference type="NCBI Taxonomy" id="342451"/>
    <lineage>
        <taxon>Bacteria</taxon>
        <taxon>Bacillati</taxon>
        <taxon>Bacillota</taxon>
        <taxon>Bacilli</taxon>
        <taxon>Bacillales</taxon>
        <taxon>Staphylococcaceae</taxon>
        <taxon>Staphylococcus</taxon>
    </lineage>
</organism>
<proteinExistence type="inferred from homology"/>
<comment type="function">
    <text evidence="1">This protein binds to the 23S rRNA, and is important in its secondary structure. It is located near the subunit interface in the base of the L7/L12 stalk, and near the tRNA binding site of the peptidyltransferase center.</text>
</comment>
<comment type="subunit">
    <text evidence="1">Part of the 50S ribosomal subunit.</text>
</comment>
<comment type="similarity">
    <text evidence="1">Belongs to the universal ribosomal protein uL6 family.</text>
</comment>
<sequence>MSRVGKKIIDIPSDVTVSVEGNTITVKGPKGELSRTMNERMTYKQDESTLEVVRPTDSKDDRTVHGTTRALINNMIQGVKEGYQKTLELVGVGYRAQMQGNDLILNVGYSHPVEIKADDGITFGVEKNTTVTVAGISKEQVGAIASNIRSVRPPEPYKGKGIRYQGEYVRRKEGKTGK</sequence>